<organism>
    <name type="scientific">Escherichia coli (strain UTI89 / UPEC)</name>
    <dbReference type="NCBI Taxonomy" id="364106"/>
    <lineage>
        <taxon>Bacteria</taxon>
        <taxon>Pseudomonadati</taxon>
        <taxon>Pseudomonadota</taxon>
        <taxon>Gammaproteobacteria</taxon>
        <taxon>Enterobacterales</taxon>
        <taxon>Enterobacteriaceae</taxon>
        <taxon>Escherichia</taxon>
    </lineage>
</organism>
<protein>
    <recommendedName>
        <fullName evidence="1">Orotidine 5'-phosphate decarboxylase</fullName>
        <ecNumber evidence="1">4.1.1.23</ecNumber>
    </recommendedName>
    <alternativeName>
        <fullName evidence="1">OMP decarboxylase</fullName>
        <shortName evidence="1">OMPDCase</shortName>
        <shortName evidence="1">OMPdecase</shortName>
    </alternativeName>
</protein>
<reference key="1">
    <citation type="journal article" date="2006" name="Proc. Natl. Acad. Sci. U.S.A.">
        <title>Identification of genes subject to positive selection in uropathogenic strains of Escherichia coli: a comparative genomics approach.</title>
        <authorList>
            <person name="Chen S.L."/>
            <person name="Hung C.-S."/>
            <person name="Xu J."/>
            <person name="Reigstad C.S."/>
            <person name="Magrini V."/>
            <person name="Sabo A."/>
            <person name="Blasiar D."/>
            <person name="Bieri T."/>
            <person name="Meyer R.R."/>
            <person name="Ozersky P."/>
            <person name="Armstrong J.R."/>
            <person name="Fulton R.S."/>
            <person name="Latreille J.P."/>
            <person name="Spieth J."/>
            <person name="Hooton T.M."/>
            <person name="Mardis E.R."/>
            <person name="Hultgren S.J."/>
            <person name="Gordon J.I."/>
        </authorList>
    </citation>
    <scope>NUCLEOTIDE SEQUENCE [LARGE SCALE GENOMIC DNA]</scope>
    <source>
        <strain>UTI89 / UPEC</strain>
    </source>
</reference>
<name>PYRF_ECOUT</name>
<gene>
    <name evidence="1" type="primary">pyrF</name>
    <name type="ordered locus">UTI89_C1552</name>
</gene>
<feature type="chain" id="PRO_1000065907" description="Orotidine 5'-phosphate decarboxylase">
    <location>
        <begin position="1"/>
        <end position="245"/>
    </location>
</feature>
<feature type="active site" description="Proton donor" evidence="1">
    <location>
        <position position="73"/>
    </location>
</feature>
<feature type="binding site" evidence="1">
    <location>
        <position position="22"/>
    </location>
    <ligand>
        <name>substrate</name>
    </ligand>
</feature>
<feature type="binding site" evidence="1">
    <location>
        <position position="44"/>
    </location>
    <ligand>
        <name>substrate</name>
    </ligand>
</feature>
<feature type="binding site" evidence="1">
    <location>
        <begin position="71"/>
        <end position="80"/>
    </location>
    <ligand>
        <name>substrate</name>
    </ligand>
</feature>
<feature type="binding site" evidence="1">
    <location>
        <position position="131"/>
    </location>
    <ligand>
        <name>substrate</name>
    </ligand>
</feature>
<feature type="binding site" evidence="1">
    <location>
        <position position="192"/>
    </location>
    <ligand>
        <name>substrate</name>
    </ligand>
</feature>
<feature type="binding site" evidence="1">
    <location>
        <position position="201"/>
    </location>
    <ligand>
        <name>substrate</name>
    </ligand>
</feature>
<feature type="binding site" evidence="1">
    <location>
        <position position="221"/>
    </location>
    <ligand>
        <name>substrate</name>
    </ligand>
</feature>
<feature type="binding site" evidence="1">
    <location>
        <position position="222"/>
    </location>
    <ligand>
        <name>substrate</name>
    </ligand>
</feature>
<evidence type="ECO:0000255" key="1">
    <source>
        <dbReference type="HAMAP-Rule" id="MF_01200"/>
    </source>
</evidence>
<proteinExistence type="inferred from homology"/>
<comment type="function">
    <text evidence="1">Catalyzes the decarboxylation of orotidine 5'-monophosphate (OMP) to uridine 5'-monophosphate (UMP).</text>
</comment>
<comment type="catalytic activity">
    <reaction evidence="1">
        <text>orotidine 5'-phosphate + H(+) = UMP + CO2</text>
        <dbReference type="Rhea" id="RHEA:11596"/>
        <dbReference type="ChEBI" id="CHEBI:15378"/>
        <dbReference type="ChEBI" id="CHEBI:16526"/>
        <dbReference type="ChEBI" id="CHEBI:57538"/>
        <dbReference type="ChEBI" id="CHEBI:57865"/>
        <dbReference type="EC" id="4.1.1.23"/>
    </reaction>
</comment>
<comment type="pathway">
    <text evidence="1">Pyrimidine metabolism; UMP biosynthesis via de novo pathway; UMP from orotate: step 2/2.</text>
</comment>
<comment type="subunit">
    <text evidence="1">Homodimer.</text>
</comment>
<comment type="similarity">
    <text evidence="1">Belongs to the OMP decarboxylase family. Type 1 subfamily.</text>
</comment>
<keyword id="KW-0210">Decarboxylase</keyword>
<keyword id="KW-0456">Lyase</keyword>
<keyword id="KW-0665">Pyrimidine biosynthesis</keyword>
<dbReference type="EC" id="4.1.1.23" evidence="1"/>
<dbReference type="EMBL" id="CP000243">
    <property type="protein sequence ID" value="ABE07030.1"/>
    <property type="molecule type" value="Genomic_DNA"/>
</dbReference>
<dbReference type="RefSeq" id="WP_001351260.1">
    <property type="nucleotide sequence ID" value="NZ_CP064825.1"/>
</dbReference>
<dbReference type="SMR" id="Q1RC84"/>
<dbReference type="KEGG" id="eci:UTI89_C1552"/>
<dbReference type="HOGENOM" id="CLU_067069_0_0_6"/>
<dbReference type="UniPathway" id="UPA00070">
    <property type="reaction ID" value="UER00120"/>
</dbReference>
<dbReference type="Proteomes" id="UP000001952">
    <property type="component" value="Chromosome"/>
</dbReference>
<dbReference type="GO" id="GO:0005829">
    <property type="term" value="C:cytosol"/>
    <property type="evidence" value="ECO:0007669"/>
    <property type="project" value="TreeGrafter"/>
</dbReference>
<dbReference type="GO" id="GO:0004590">
    <property type="term" value="F:orotidine-5'-phosphate decarboxylase activity"/>
    <property type="evidence" value="ECO:0007669"/>
    <property type="project" value="UniProtKB-UniRule"/>
</dbReference>
<dbReference type="GO" id="GO:0006207">
    <property type="term" value="P:'de novo' pyrimidine nucleobase biosynthetic process"/>
    <property type="evidence" value="ECO:0007669"/>
    <property type="project" value="InterPro"/>
</dbReference>
<dbReference type="GO" id="GO:0044205">
    <property type="term" value="P:'de novo' UMP biosynthetic process"/>
    <property type="evidence" value="ECO:0007669"/>
    <property type="project" value="UniProtKB-UniRule"/>
</dbReference>
<dbReference type="CDD" id="cd04725">
    <property type="entry name" value="OMP_decarboxylase_like"/>
    <property type="match status" value="1"/>
</dbReference>
<dbReference type="FunFam" id="3.20.20.70:FF:000015">
    <property type="entry name" value="Orotidine 5'-phosphate decarboxylase"/>
    <property type="match status" value="1"/>
</dbReference>
<dbReference type="Gene3D" id="3.20.20.70">
    <property type="entry name" value="Aldolase class I"/>
    <property type="match status" value="1"/>
</dbReference>
<dbReference type="HAMAP" id="MF_01200_B">
    <property type="entry name" value="OMPdecase_type1_B"/>
    <property type="match status" value="1"/>
</dbReference>
<dbReference type="InterPro" id="IPR013785">
    <property type="entry name" value="Aldolase_TIM"/>
</dbReference>
<dbReference type="InterPro" id="IPR014732">
    <property type="entry name" value="OMPdecase"/>
</dbReference>
<dbReference type="InterPro" id="IPR018089">
    <property type="entry name" value="OMPdecase_AS"/>
</dbReference>
<dbReference type="InterPro" id="IPR047596">
    <property type="entry name" value="OMPdecase_bac"/>
</dbReference>
<dbReference type="InterPro" id="IPR001754">
    <property type="entry name" value="OMPdeCOase_dom"/>
</dbReference>
<dbReference type="InterPro" id="IPR011060">
    <property type="entry name" value="RibuloseP-bd_barrel"/>
</dbReference>
<dbReference type="NCBIfam" id="NF001273">
    <property type="entry name" value="PRK00230.1"/>
    <property type="match status" value="1"/>
</dbReference>
<dbReference type="NCBIfam" id="TIGR01740">
    <property type="entry name" value="pyrF"/>
    <property type="match status" value="1"/>
</dbReference>
<dbReference type="PANTHER" id="PTHR32119">
    <property type="entry name" value="OROTIDINE 5'-PHOSPHATE DECARBOXYLASE"/>
    <property type="match status" value="1"/>
</dbReference>
<dbReference type="PANTHER" id="PTHR32119:SF2">
    <property type="entry name" value="OROTIDINE 5'-PHOSPHATE DECARBOXYLASE"/>
    <property type="match status" value="1"/>
</dbReference>
<dbReference type="Pfam" id="PF00215">
    <property type="entry name" value="OMPdecase"/>
    <property type="match status" value="1"/>
</dbReference>
<dbReference type="SMART" id="SM00934">
    <property type="entry name" value="OMPdecase"/>
    <property type="match status" value="1"/>
</dbReference>
<dbReference type="SUPFAM" id="SSF51366">
    <property type="entry name" value="Ribulose-phoshate binding barrel"/>
    <property type="match status" value="1"/>
</dbReference>
<dbReference type="PROSITE" id="PS00156">
    <property type="entry name" value="OMPDECASE"/>
    <property type="match status" value="1"/>
</dbReference>
<sequence length="245" mass="26234">MTLTASSSSRAVTNSPVVVALDYHNRDAAMAFVDKIDPRDCRLKVGKEMFTLFGPQFVRELQQRGFDIFLDLKFHDIPNTAAHAVAAAADLGVWMVNVHASGGARMMTAAREALVPFGKDAPLLIAVTVLTSMEASDLADLGVTLSPADYAERLAALTQKCGLDGVVCSAQEAVRFKQVFGQEFKLVTPGIRPQGSDAGDQRRIMTPEQALAAGVDYMVIGRPVTQSVDPAQTLKAINASLQRSA</sequence>
<accession>Q1RC84</accession>